<dbReference type="EMBL" id="CH954177">
    <property type="protein sequence ID" value="EDV57992.1"/>
    <property type="molecule type" value="Genomic_DNA"/>
</dbReference>
<dbReference type="EnsemblMetazoa" id="FBtr0144281">
    <property type="protein sequence ID" value="FBpp0142773"/>
    <property type="gene ID" value="FBgn0116359"/>
</dbReference>
<dbReference type="EnsemblMetazoa" id="XM_001968897.3">
    <property type="protein sequence ID" value="XP_001968933.1"/>
    <property type="gene ID" value="LOC6542294"/>
</dbReference>
<dbReference type="GeneID" id="6542294"/>
<dbReference type="KEGG" id="der:6542294"/>
<dbReference type="CTD" id="57019"/>
<dbReference type="eggNOG" id="KOG4020">
    <property type="taxonomic scope" value="Eukaryota"/>
</dbReference>
<dbReference type="HOGENOM" id="CLU_064393_1_0_1"/>
<dbReference type="OMA" id="GFINCRE"/>
<dbReference type="OrthoDB" id="311633at2759"/>
<dbReference type="PhylomeDB" id="B3N5N3"/>
<dbReference type="Proteomes" id="UP000008711">
    <property type="component" value="Unassembled WGS sequence"/>
</dbReference>
<dbReference type="GO" id="GO:0005758">
    <property type="term" value="C:mitochondrial intermembrane space"/>
    <property type="evidence" value="ECO:0007669"/>
    <property type="project" value="UniProtKB-SubCell"/>
</dbReference>
<dbReference type="GO" id="GO:0051537">
    <property type="term" value="F:2 iron, 2 sulfur cluster binding"/>
    <property type="evidence" value="ECO:0007669"/>
    <property type="project" value="UniProtKB-UniRule"/>
</dbReference>
<dbReference type="GO" id="GO:0051539">
    <property type="term" value="F:4 iron, 4 sulfur cluster binding"/>
    <property type="evidence" value="ECO:0007669"/>
    <property type="project" value="UniProtKB-KW"/>
</dbReference>
<dbReference type="GO" id="GO:0009055">
    <property type="term" value="F:electron transfer activity"/>
    <property type="evidence" value="ECO:0007669"/>
    <property type="project" value="UniProtKB-UniRule"/>
</dbReference>
<dbReference type="GO" id="GO:0046872">
    <property type="term" value="F:metal ion binding"/>
    <property type="evidence" value="ECO:0007669"/>
    <property type="project" value="UniProtKB-KW"/>
</dbReference>
<dbReference type="GO" id="GO:0016226">
    <property type="term" value="P:iron-sulfur cluster assembly"/>
    <property type="evidence" value="ECO:0007669"/>
    <property type="project" value="UniProtKB-UniRule"/>
</dbReference>
<dbReference type="FunFam" id="3.40.50.150:FF:000545">
    <property type="entry name" value="Anamorsin homolog"/>
    <property type="match status" value="1"/>
</dbReference>
<dbReference type="Gene3D" id="3.40.50.150">
    <property type="entry name" value="Vaccinia Virus protein VP39"/>
    <property type="match status" value="1"/>
</dbReference>
<dbReference type="HAMAP" id="MF_03115">
    <property type="entry name" value="Anamorsin"/>
    <property type="match status" value="1"/>
</dbReference>
<dbReference type="InterPro" id="IPR007785">
    <property type="entry name" value="Anamorsin"/>
</dbReference>
<dbReference type="InterPro" id="IPR049011">
    <property type="entry name" value="Anamorsin_N_metazoan"/>
</dbReference>
<dbReference type="InterPro" id="IPR046408">
    <property type="entry name" value="CIAPIN1"/>
</dbReference>
<dbReference type="InterPro" id="IPR029063">
    <property type="entry name" value="SAM-dependent_MTases_sf"/>
</dbReference>
<dbReference type="PANTHER" id="PTHR13273">
    <property type="entry name" value="ANAMORSIN"/>
    <property type="match status" value="1"/>
</dbReference>
<dbReference type="PANTHER" id="PTHR13273:SF14">
    <property type="entry name" value="ANAMORSIN"/>
    <property type="match status" value="1"/>
</dbReference>
<dbReference type="Pfam" id="PF20922">
    <property type="entry name" value="Anamorsin_N"/>
    <property type="match status" value="1"/>
</dbReference>
<dbReference type="Pfam" id="PF05093">
    <property type="entry name" value="CIAPIN1"/>
    <property type="match status" value="2"/>
</dbReference>
<name>DRE2_DROER</name>
<sequence length="248" mass="27105">MENFKGLQKSLYIWTDSADLDKRVEQLKSATGGDVALENVHRLSFSSYANSSFDLIVIECAQLTDSYVKLLHMLKPSGKLHLVSFIGPAASLLQEIKLSGFINCREDSPDALTAEKPGYETGSSARLSFAKKNASAINVWKISGDDEELIDEEELLDEEDKQKPDPAGLRVCSTTGKRKACKNCSCGLAEELETEKQSQKATENAKSSCGNCYLGDAFRCSTCPYLGMPAFKPGEKVQLGDNLLKSDI</sequence>
<evidence type="ECO:0000255" key="1">
    <source>
        <dbReference type="HAMAP-Rule" id="MF_03115"/>
    </source>
</evidence>
<proteinExistence type="inferred from homology"/>
<accession>B3N5N3</accession>
<feature type="chain" id="PRO_0000392315" description="Anamorsin homolog">
    <location>
        <begin position="1"/>
        <end position="248"/>
    </location>
</feature>
<feature type="region of interest" description="N-terminal SAM-like domain" evidence="1">
    <location>
        <begin position="4"/>
        <end position="129"/>
    </location>
</feature>
<feature type="region of interest" description="Linker" evidence="1">
    <location>
        <begin position="130"/>
        <end position="161"/>
    </location>
</feature>
<feature type="region of interest" description="Fe-S binding site A" evidence="1">
    <location>
        <begin position="172"/>
        <end position="186"/>
    </location>
</feature>
<feature type="region of interest" description="Fe-S binding site B" evidence="1">
    <location>
        <begin position="209"/>
        <end position="223"/>
    </location>
</feature>
<feature type="short sequence motif" description="Cx2C motif 1" evidence="1">
    <location>
        <begin position="209"/>
        <end position="212"/>
    </location>
</feature>
<feature type="short sequence motif" description="Cx2C motif 2" evidence="1">
    <location>
        <begin position="220"/>
        <end position="223"/>
    </location>
</feature>
<feature type="binding site" evidence="1">
    <location>
        <position position="172"/>
    </location>
    <ligand>
        <name>[2Fe-2S] cluster</name>
        <dbReference type="ChEBI" id="CHEBI:190135"/>
    </ligand>
</feature>
<feature type="binding site" evidence="1">
    <location>
        <position position="181"/>
    </location>
    <ligand>
        <name>[2Fe-2S] cluster</name>
        <dbReference type="ChEBI" id="CHEBI:190135"/>
    </ligand>
</feature>
<feature type="binding site" evidence="1">
    <location>
        <position position="184"/>
    </location>
    <ligand>
        <name>[2Fe-2S] cluster</name>
        <dbReference type="ChEBI" id="CHEBI:190135"/>
    </ligand>
</feature>
<feature type="binding site" evidence="1">
    <location>
        <position position="186"/>
    </location>
    <ligand>
        <name>[2Fe-2S] cluster</name>
        <dbReference type="ChEBI" id="CHEBI:190135"/>
    </ligand>
</feature>
<feature type="binding site" evidence="1">
    <location>
        <position position="209"/>
    </location>
    <ligand>
        <name>[4Fe-4S] cluster</name>
        <dbReference type="ChEBI" id="CHEBI:49883"/>
    </ligand>
</feature>
<feature type="binding site" evidence="1">
    <location>
        <position position="212"/>
    </location>
    <ligand>
        <name>[4Fe-4S] cluster</name>
        <dbReference type="ChEBI" id="CHEBI:49883"/>
    </ligand>
</feature>
<feature type="binding site" evidence="1">
    <location>
        <position position="220"/>
    </location>
    <ligand>
        <name>[4Fe-4S] cluster</name>
        <dbReference type="ChEBI" id="CHEBI:49883"/>
    </ligand>
</feature>
<feature type="binding site" evidence="1">
    <location>
        <position position="223"/>
    </location>
    <ligand>
        <name>[4Fe-4S] cluster</name>
        <dbReference type="ChEBI" id="CHEBI:49883"/>
    </ligand>
</feature>
<protein>
    <recommendedName>
        <fullName evidence="1">Anamorsin homolog</fullName>
    </recommendedName>
    <alternativeName>
        <fullName evidence="1">Fe-S cluster assembly protein DRE2 homolog</fullName>
    </alternativeName>
</protein>
<organism>
    <name type="scientific">Drosophila erecta</name>
    <name type="common">Fruit fly</name>
    <dbReference type="NCBI Taxonomy" id="7220"/>
    <lineage>
        <taxon>Eukaryota</taxon>
        <taxon>Metazoa</taxon>
        <taxon>Ecdysozoa</taxon>
        <taxon>Arthropoda</taxon>
        <taxon>Hexapoda</taxon>
        <taxon>Insecta</taxon>
        <taxon>Pterygota</taxon>
        <taxon>Neoptera</taxon>
        <taxon>Endopterygota</taxon>
        <taxon>Diptera</taxon>
        <taxon>Brachycera</taxon>
        <taxon>Muscomorpha</taxon>
        <taxon>Ephydroidea</taxon>
        <taxon>Drosophilidae</taxon>
        <taxon>Drosophila</taxon>
        <taxon>Sophophora</taxon>
    </lineage>
</organism>
<comment type="function">
    <text evidence="1">Component of the cytosolic iron-sulfur (Fe-S) protein assembly (CIA) machinery. Required for the maturation of extramitochondrial Fe-S proteins. Part of an electron transfer chain functioning in an early step of cytosolic Fe-S biogenesis, facilitating the de novo assembly of a [4Fe-4S] cluster on the cytosolic Fe-S scaffold complex. Electrons are transferred from NADPH via a FAD- and FMN-containing diflavin oxidoreductase. Together with the diflavin oxidoreductase, also required for the assembly of the diferric tyrosyl radical cofactor of ribonucleotide reductase (RNR), probably by providing electrons for reduction during radical cofactor maturation in the catalytic small subunit.</text>
</comment>
<comment type="cofactor">
    <cofactor evidence="1">
        <name>[2Fe-2S] cluster</name>
        <dbReference type="ChEBI" id="CHEBI:190135"/>
    </cofactor>
</comment>
<comment type="cofactor">
    <cofactor evidence="1">
        <name>[4Fe-4S] cluster</name>
        <dbReference type="ChEBI" id="CHEBI:49883"/>
    </cofactor>
</comment>
<comment type="subunit">
    <text evidence="1">Monomer.</text>
</comment>
<comment type="subcellular location">
    <subcellularLocation>
        <location evidence="1">Cytoplasm</location>
    </subcellularLocation>
    <subcellularLocation>
        <location evidence="1">Mitochondrion intermembrane space</location>
    </subcellularLocation>
</comment>
<comment type="domain">
    <text evidence="1">The C-terminal domain binds 2 Fe-S clusters but is otherwise mostly in an intrinsically disordered conformation.</text>
</comment>
<comment type="domain">
    <text evidence="1">The N-terminal domain has structural similarity with S-adenosyl-L-methionine-dependent methyltransferases, but does not bind S-adenosyl-L-methionine. It is required for correct assembly of the 2 Fe-S clusters.</text>
</comment>
<comment type="domain">
    <text evidence="1">The twin Cx2C motifs are involved in the recognition by the mitochondrial MIA40-ERV1 disulfide relay system. The formation of 2 disulfide bonds in the Cx2C motifs through dithiol/disulfide exchange reactions effectively traps the protein in the mitochondrial intermembrane space.</text>
</comment>
<comment type="similarity">
    <text evidence="1">Belongs to the anamorsin family.</text>
</comment>
<keyword id="KW-0001">2Fe-2S</keyword>
<keyword id="KW-0004">4Fe-4S</keyword>
<keyword id="KW-0963">Cytoplasm</keyword>
<keyword id="KW-0408">Iron</keyword>
<keyword id="KW-0411">Iron-sulfur</keyword>
<keyword id="KW-0479">Metal-binding</keyword>
<keyword id="KW-0496">Mitochondrion</keyword>
<gene>
    <name evidence="1" type="primary">CIAPIN1</name>
    <name evidence="1" type="synonym">l(2)35Bg</name>
    <name type="ORF">GG24227</name>
</gene>
<reference key="1">
    <citation type="journal article" date="2007" name="Nature">
        <title>Evolution of genes and genomes on the Drosophila phylogeny.</title>
        <authorList>
            <consortium name="Drosophila 12 genomes consortium"/>
        </authorList>
    </citation>
    <scope>NUCLEOTIDE SEQUENCE [LARGE SCALE GENOMIC DNA]</scope>
    <source>
        <strain>Tucson 14021-0224.01</strain>
    </source>
</reference>